<geneLocation type="chloroplast"/>
<organism>
    <name type="scientific">Oryza sativa subsp. japonica</name>
    <name type="common">Rice</name>
    <dbReference type="NCBI Taxonomy" id="39947"/>
    <lineage>
        <taxon>Eukaryota</taxon>
        <taxon>Viridiplantae</taxon>
        <taxon>Streptophyta</taxon>
        <taxon>Embryophyta</taxon>
        <taxon>Tracheophyta</taxon>
        <taxon>Spermatophyta</taxon>
        <taxon>Magnoliopsida</taxon>
        <taxon>Liliopsida</taxon>
        <taxon>Poales</taxon>
        <taxon>Poaceae</taxon>
        <taxon>BOP clade</taxon>
        <taxon>Oryzoideae</taxon>
        <taxon>Oryzeae</taxon>
        <taxon>Oryzinae</taxon>
        <taxon>Oryza</taxon>
        <taxon>Oryza sativa</taxon>
    </lineage>
</organism>
<proteinExistence type="inferred from homology"/>
<accession>P0C410</accession>
<accession>P12162</accession>
<accession>Q6QXW2</accession>
<accession>Q6QY88</accession>
<dbReference type="EMBL" id="X15901">
    <property type="protein sequence ID" value="CAA34010.1"/>
    <property type="molecule type" value="Genomic_DNA"/>
</dbReference>
<dbReference type="EMBL" id="AY522330">
    <property type="protein sequence ID" value="AAS46106.1"/>
    <property type="status" value="ALT_INIT"/>
    <property type="molecule type" value="Genomic_DNA"/>
</dbReference>
<dbReference type="PIR" id="JQ0203">
    <property type="entry name" value="F2RZKS"/>
</dbReference>
<dbReference type="RefSeq" id="NP_039363.1">
    <property type="nucleotide sequence ID" value="NC_001320.1"/>
</dbReference>
<dbReference type="SMR" id="P0C410"/>
<dbReference type="FunCoup" id="P0C410">
    <property type="interactions" value="72"/>
</dbReference>
<dbReference type="STRING" id="39947.P0C410"/>
<dbReference type="PaxDb" id="39947-P0C410"/>
<dbReference type="EnsemblPlants" id="Os11t0592350-00">
    <property type="protein sequence ID" value="Os11t0592350-00"/>
    <property type="gene ID" value="Os11g0592350"/>
</dbReference>
<dbReference type="EnsemblPlants" id="transcript-psbK">
    <property type="protein sequence ID" value="cds-CAA34010.1"/>
    <property type="gene ID" value="gene-psbK"/>
</dbReference>
<dbReference type="GeneID" id="3131417"/>
<dbReference type="Gramene" id="Os11t0592350-00">
    <property type="protein sequence ID" value="Os11t0592350-00"/>
    <property type="gene ID" value="Os11g0592350"/>
</dbReference>
<dbReference type="Gramene" id="transcript-psbK">
    <property type="protein sequence ID" value="cds-CAA34010.1"/>
    <property type="gene ID" value="gene-psbK"/>
</dbReference>
<dbReference type="KEGG" id="dosa:psbK"/>
<dbReference type="KEGG" id="osa:3131417"/>
<dbReference type="eggNOG" id="ENOG502SAFC">
    <property type="taxonomic scope" value="Eukaryota"/>
</dbReference>
<dbReference type="HOGENOM" id="CLU_174355_1_0_1"/>
<dbReference type="InParanoid" id="P0C410"/>
<dbReference type="OMA" id="PIIDVMP"/>
<dbReference type="OrthoDB" id="1868502at2759"/>
<dbReference type="Proteomes" id="UP000059680">
    <property type="component" value="Chloroplast"/>
</dbReference>
<dbReference type="ExpressionAtlas" id="P0C410">
    <property type="expression patterns" value="baseline and differential"/>
</dbReference>
<dbReference type="GO" id="GO:0009535">
    <property type="term" value="C:chloroplast thylakoid membrane"/>
    <property type="evidence" value="ECO:0007669"/>
    <property type="project" value="UniProtKB-SubCell"/>
</dbReference>
<dbReference type="GO" id="GO:0009539">
    <property type="term" value="C:photosystem II reaction center"/>
    <property type="evidence" value="ECO:0007669"/>
    <property type="project" value="InterPro"/>
</dbReference>
<dbReference type="GO" id="GO:0009536">
    <property type="term" value="C:plastid"/>
    <property type="evidence" value="ECO:0000305"/>
    <property type="project" value="Gramene"/>
</dbReference>
<dbReference type="GO" id="GO:0015979">
    <property type="term" value="P:photosynthesis"/>
    <property type="evidence" value="ECO:0007669"/>
    <property type="project" value="UniProtKB-UniRule"/>
</dbReference>
<dbReference type="HAMAP" id="MF_00441">
    <property type="entry name" value="PSII_PsbK"/>
    <property type="match status" value="1"/>
</dbReference>
<dbReference type="InterPro" id="IPR003687">
    <property type="entry name" value="PSII_PsbK"/>
</dbReference>
<dbReference type="InterPro" id="IPR037270">
    <property type="entry name" value="PSII_PsbK_sf"/>
</dbReference>
<dbReference type="NCBIfam" id="NF002715">
    <property type="entry name" value="PRK02553.1"/>
    <property type="match status" value="1"/>
</dbReference>
<dbReference type="PANTHER" id="PTHR35325">
    <property type="match status" value="1"/>
</dbReference>
<dbReference type="PANTHER" id="PTHR35325:SF1">
    <property type="entry name" value="PHOTOSYSTEM II REACTION CENTER PROTEIN K"/>
    <property type="match status" value="1"/>
</dbReference>
<dbReference type="Pfam" id="PF02533">
    <property type="entry name" value="PsbK"/>
    <property type="match status" value="1"/>
</dbReference>
<dbReference type="SUPFAM" id="SSF161037">
    <property type="entry name" value="Photosystem II reaction center protein K, PsbK"/>
    <property type="match status" value="1"/>
</dbReference>
<protein>
    <recommendedName>
        <fullName evidence="1">Photosystem II reaction center protein K</fullName>
        <shortName evidence="1">PSII-K</shortName>
    </recommendedName>
</protein>
<gene>
    <name evidence="1" type="primary">psbK</name>
    <name type="ordered locus">LOC_Osp1g00140</name>
    <name type="ORF">Nip011</name>
</gene>
<sequence length="61" mass="6982">MPNILSLTCICFNSVIYPTSFFFAKLPEAYAIFNPIVDFMPVIPVLFFLLAFVWQAAVSFR</sequence>
<name>PSBK_ORYSJ</name>
<feature type="propeptide" id="PRO_0000289566" evidence="1">
    <location>
        <begin position="1"/>
        <end position="24"/>
    </location>
</feature>
<feature type="chain" id="PRO_0000289567" description="Photosystem II reaction center protein K" evidence="1">
    <location>
        <begin position="25"/>
        <end position="61"/>
    </location>
</feature>
<feature type="transmembrane region" description="Helical" evidence="1">
    <location>
        <begin position="32"/>
        <end position="52"/>
    </location>
</feature>
<reference key="1">
    <citation type="journal article" date="1989" name="Mol. Gen. Genet.">
        <title>The complete sequence of the rice (Oryza sativa) chloroplast genome: intermolecular recombination between distinct tRNA genes accounts for a major plastid DNA inversion during the evolution of the cereals.</title>
        <authorList>
            <person name="Hiratsuka J."/>
            <person name="Shimada H."/>
            <person name="Whittier R."/>
            <person name="Ishibashi T."/>
            <person name="Sakamoto M."/>
            <person name="Mori M."/>
            <person name="Kondo C."/>
            <person name="Honji Y."/>
            <person name="Sun C.-R."/>
            <person name="Meng B.-Y."/>
            <person name="Li Y.-Q."/>
            <person name="Kanno A."/>
            <person name="Nishizawa Y."/>
            <person name="Hirai A."/>
            <person name="Shinozaki K."/>
            <person name="Sugiura M."/>
        </authorList>
    </citation>
    <scope>NUCLEOTIDE SEQUENCE [LARGE SCALE GENOMIC DNA]</scope>
    <source>
        <strain>cv. Nipponbare</strain>
    </source>
</reference>
<reference key="2">
    <citation type="journal article" date="2004" name="Plant Physiol.">
        <title>A comparison of rice chloroplast genomes.</title>
        <authorList>
            <person name="Tang J."/>
            <person name="Xia H."/>
            <person name="Cao M."/>
            <person name="Zhang X."/>
            <person name="Zeng W."/>
            <person name="Hu S."/>
            <person name="Tong W."/>
            <person name="Wang J."/>
            <person name="Wang J."/>
            <person name="Yu J."/>
            <person name="Yang H."/>
            <person name="Zhu L."/>
        </authorList>
    </citation>
    <scope>NUCLEOTIDE SEQUENCE [LARGE SCALE GENOMIC DNA]</scope>
    <source>
        <strain>cv. Nipponbare</strain>
    </source>
</reference>
<evidence type="ECO:0000255" key="1">
    <source>
        <dbReference type="HAMAP-Rule" id="MF_00441"/>
    </source>
</evidence>
<evidence type="ECO:0000305" key="2"/>
<keyword id="KW-0150">Chloroplast</keyword>
<keyword id="KW-0472">Membrane</keyword>
<keyword id="KW-0602">Photosynthesis</keyword>
<keyword id="KW-0604">Photosystem II</keyword>
<keyword id="KW-0934">Plastid</keyword>
<keyword id="KW-0674">Reaction center</keyword>
<keyword id="KW-1185">Reference proteome</keyword>
<keyword id="KW-0793">Thylakoid</keyword>
<keyword id="KW-0812">Transmembrane</keyword>
<keyword id="KW-1133">Transmembrane helix</keyword>
<comment type="function">
    <text evidence="1">One of the components of the core complex of photosystem II (PSII). PSII is a light-driven water:plastoquinone oxidoreductase that uses light energy to abstract electrons from H(2)O, generating O(2) and a proton gradient subsequently used for ATP formation. It consists of a core antenna complex that captures photons, and an electron transfer chain that converts photonic excitation into a charge separation.</text>
</comment>
<comment type="subunit">
    <text evidence="1">PSII is composed of 1 copy each of membrane proteins PsbA, PsbB, PsbC, PsbD, PsbE, PsbF, PsbH, PsbI, PsbJ, PsbK, PsbL, PsbM, PsbT, PsbX, PsbY, PsbZ, Psb30/Ycf12, at least 3 peripheral proteins of the oxygen-evolving complex and a large number of cofactors. It forms dimeric complexes.</text>
</comment>
<comment type="subcellular location">
    <subcellularLocation>
        <location evidence="1">Plastid</location>
        <location evidence="1">Chloroplast thylakoid membrane</location>
        <topology evidence="1">Single-pass membrane protein</topology>
    </subcellularLocation>
</comment>
<comment type="similarity">
    <text evidence="1">Belongs to the PsbK family.</text>
</comment>
<comment type="sequence caution" evidence="2">
    <conflict type="erroneous initiation">
        <sequence resource="EMBL-CDS" id="AAS46106"/>
    </conflict>
    <text>Extended N-terminus.</text>
</comment>